<dbReference type="EMBL" id="AL590842">
    <property type="protein sequence ID" value="CAL19322.1"/>
    <property type="molecule type" value="Genomic_DNA"/>
</dbReference>
<dbReference type="EMBL" id="AE009952">
    <property type="protein sequence ID" value="AAM87083.1"/>
    <property type="molecule type" value="Genomic_DNA"/>
</dbReference>
<dbReference type="EMBL" id="AE017042">
    <property type="protein sequence ID" value="AAS63139.1"/>
    <property type="molecule type" value="Genomic_DNA"/>
</dbReference>
<dbReference type="PIR" id="AH0079">
    <property type="entry name" value="AH0079"/>
</dbReference>
<dbReference type="RefSeq" id="WP_001144069.1">
    <property type="nucleotide sequence ID" value="NZ_WUCM01000022.1"/>
</dbReference>
<dbReference type="RefSeq" id="YP_002345713.1">
    <property type="nucleotide sequence ID" value="NC_003143.1"/>
</dbReference>
<dbReference type="SMR" id="P68686"/>
<dbReference type="STRING" id="214092.YPO0645"/>
<dbReference type="PaxDb" id="214092-YPO0645"/>
<dbReference type="DNASU" id="1148482"/>
<dbReference type="EnsemblBacteria" id="AAS63139">
    <property type="protein sequence ID" value="AAS63139"/>
    <property type="gene ID" value="YP_2960"/>
</dbReference>
<dbReference type="GeneID" id="98390195"/>
<dbReference type="KEGG" id="ype:YPO0645"/>
<dbReference type="KEGG" id="ypk:y3535"/>
<dbReference type="KEGG" id="ypm:YP_2960"/>
<dbReference type="PATRIC" id="fig|214092.21.peg.903"/>
<dbReference type="eggNOG" id="COG0828">
    <property type="taxonomic scope" value="Bacteria"/>
</dbReference>
<dbReference type="HOGENOM" id="CLU_159258_1_0_6"/>
<dbReference type="OMA" id="HQHFEKP"/>
<dbReference type="OrthoDB" id="9799244at2"/>
<dbReference type="Proteomes" id="UP000000815">
    <property type="component" value="Chromosome"/>
</dbReference>
<dbReference type="Proteomes" id="UP000001019">
    <property type="component" value="Chromosome"/>
</dbReference>
<dbReference type="Proteomes" id="UP000002490">
    <property type="component" value="Chromosome"/>
</dbReference>
<dbReference type="GO" id="GO:1990904">
    <property type="term" value="C:ribonucleoprotein complex"/>
    <property type="evidence" value="ECO:0007669"/>
    <property type="project" value="UniProtKB-KW"/>
</dbReference>
<dbReference type="GO" id="GO:0005840">
    <property type="term" value="C:ribosome"/>
    <property type="evidence" value="ECO:0007669"/>
    <property type="project" value="UniProtKB-KW"/>
</dbReference>
<dbReference type="GO" id="GO:0003735">
    <property type="term" value="F:structural constituent of ribosome"/>
    <property type="evidence" value="ECO:0007669"/>
    <property type="project" value="InterPro"/>
</dbReference>
<dbReference type="GO" id="GO:0006412">
    <property type="term" value="P:translation"/>
    <property type="evidence" value="ECO:0007669"/>
    <property type="project" value="UniProtKB-UniRule"/>
</dbReference>
<dbReference type="FunFam" id="1.20.5.1150:FF:000001">
    <property type="entry name" value="30S ribosomal protein S21"/>
    <property type="match status" value="1"/>
</dbReference>
<dbReference type="Gene3D" id="1.20.5.1150">
    <property type="entry name" value="Ribosomal protein S8"/>
    <property type="match status" value="1"/>
</dbReference>
<dbReference type="HAMAP" id="MF_00358">
    <property type="entry name" value="Ribosomal_bS21"/>
    <property type="match status" value="1"/>
</dbReference>
<dbReference type="InterPro" id="IPR001911">
    <property type="entry name" value="Ribosomal_bS21"/>
</dbReference>
<dbReference type="InterPro" id="IPR018278">
    <property type="entry name" value="Ribosomal_bS21_CS"/>
</dbReference>
<dbReference type="InterPro" id="IPR038380">
    <property type="entry name" value="Ribosomal_bS21_sf"/>
</dbReference>
<dbReference type="NCBIfam" id="TIGR00030">
    <property type="entry name" value="S21p"/>
    <property type="match status" value="1"/>
</dbReference>
<dbReference type="PANTHER" id="PTHR21109">
    <property type="entry name" value="MITOCHONDRIAL 28S RIBOSOMAL PROTEIN S21"/>
    <property type="match status" value="1"/>
</dbReference>
<dbReference type="PANTHER" id="PTHR21109:SF22">
    <property type="entry name" value="SMALL RIBOSOMAL SUBUNIT PROTEIN BS21"/>
    <property type="match status" value="1"/>
</dbReference>
<dbReference type="Pfam" id="PF01165">
    <property type="entry name" value="Ribosomal_S21"/>
    <property type="match status" value="1"/>
</dbReference>
<dbReference type="PRINTS" id="PR00976">
    <property type="entry name" value="RIBOSOMALS21"/>
</dbReference>
<dbReference type="PROSITE" id="PS01181">
    <property type="entry name" value="RIBOSOMAL_S21"/>
    <property type="match status" value="1"/>
</dbReference>
<accession>P68686</accession>
<accession>P02379</accession>
<accession>Q0WJ25</accession>
<accession>Q8ZI69</accession>
<feature type="initiator methionine" description="Removed" evidence="1">
    <location>
        <position position="1"/>
    </location>
</feature>
<feature type="chain" id="PRO_0000178409" description="Small ribosomal subunit protein bS21">
    <location>
        <begin position="2"/>
        <end position="71"/>
    </location>
</feature>
<feature type="region of interest" description="Disordered" evidence="2">
    <location>
        <begin position="43"/>
        <end position="71"/>
    </location>
</feature>
<feature type="compositionally biased region" description="Basic residues" evidence="2">
    <location>
        <begin position="46"/>
        <end position="59"/>
    </location>
</feature>
<feature type="compositionally biased region" description="Basic and acidic residues" evidence="2">
    <location>
        <begin position="60"/>
        <end position="71"/>
    </location>
</feature>
<evidence type="ECO:0000250" key="1"/>
<evidence type="ECO:0000256" key="2">
    <source>
        <dbReference type="SAM" id="MobiDB-lite"/>
    </source>
</evidence>
<evidence type="ECO:0000305" key="3"/>
<reference key="1">
    <citation type="journal article" date="2001" name="Nature">
        <title>Genome sequence of Yersinia pestis, the causative agent of plague.</title>
        <authorList>
            <person name="Parkhill J."/>
            <person name="Wren B.W."/>
            <person name="Thomson N.R."/>
            <person name="Titball R.W."/>
            <person name="Holden M.T.G."/>
            <person name="Prentice M.B."/>
            <person name="Sebaihia M."/>
            <person name="James K.D."/>
            <person name="Churcher C.M."/>
            <person name="Mungall K.L."/>
            <person name="Baker S."/>
            <person name="Basham D."/>
            <person name="Bentley S.D."/>
            <person name="Brooks K."/>
            <person name="Cerdeno-Tarraga A.-M."/>
            <person name="Chillingworth T."/>
            <person name="Cronin A."/>
            <person name="Davies R.M."/>
            <person name="Davis P."/>
            <person name="Dougan G."/>
            <person name="Feltwell T."/>
            <person name="Hamlin N."/>
            <person name="Holroyd S."/>
            <person name="Jagels K."/>
            <person name="Karlyshev A.V."/>
            <person name="Leather S."/>
            <person name="Moule S."/>
            <person name="Oyston P.C.F."/>
            <person name="Quail M.A."/>
            <person name="Rutherford K.M."/>
            <person name="Simmonds M."/>
            <person name="Skelton J."/>
            <person name="Stevens K."/>
            <person name="Whitehead S."/>
            <person name="Barrell B.G."/>
        </authorList>
    </citation>
    <scope>NUCLEOTIDE SEQUENCE [LARGE SCALE GENOMIC DNA]</scope>
    <source>
        <strain>CO-92 / Biovar Orientalis</strain>
    </source>
</reference>
<reference key="2">
    <citation type="journal article" date="2002" name="J. Bacteriol.">
        <title>Genome sequence of Yersinia pestis KIM.</title>
        <authorList>
            <person name="Deng W."/>
            <person name="Burland V."/>
            <person name="Plunkett G. III"/>
            <person name="Boutin A."/>
            <person name="Mayhew G.F."/>
            <person name="Liss P."/>
            <person name="Perna N.T."/>
            <person name="Rose D.J."/>
            <person name="Mau B."/>
            <person name="Zhou S."/>
            <person name="Schwartz D.C."/>
            <person name="Fetherston J.D."/>
            <person name="Lindler L.E."/>
            <person name="Brubaker R.R."/>
            <person name="Plano G.V."/>
            <person name="Straley S.C."/>
            <person name="McDonough K.A."/>
            <person name="Nilles M.L."/>
            <person name="Matson J.S."/>
            <person name="Blattner F.R."/>
            <person name="Perry R.D."/>
        </authorList>
    </citation>
    <scope>NUCLEOTIDE SEQUENCE [LARGE SCALE GENOMIC DNA]</scope>
    <source>
        <strain>KIM10+ / Biovar Mediaevalis</strain>
    </source>
</reference>
<reference key="3">
    <citation type="journal article" date="2004" name="DNA Res.">
        <title>Complete genome sequence of Yersinia pestis strain 91001, an isolate avirulent to humans.</title>
        <authorList>
            <person name="Song Y."/>
            <person name="Tong Z."/>
            <person name="Wang J."/>
            <person name="Wang L."/>
            <person name="Guo Z."/>
            <person name="Han Y."/>
            <person name="Zhang J."/>
            <person name="Pei D."/>
            <person name="Zhou D."/>
            <person name="Qin H."/>
            <person name="Pang X."/>
            <person name="Han Y."/>
            <person name="Zhai J."/>
            <person name="Li M."/>
            <person name="Cui B."/>
            <person name="Qi Z."/>
            <person name="Jin L."/>
            <person name="Dai R."/>
            <person name="Chen F."/>
            <person name="Li S."/>
            <person name="Ye C."/>
            <person name="Du Z."/>
            <person name="Lin W."/>
            <person name="Wang J."/>
            <person name="Yu J."/>
            <person name="Yang H."/>
            <person name="Wang J."/>
            <person name="Huang P."/>
            <person name="Yang R."/>
        </authorList>
    </citation>
    <scope>NUCLEOTIDE SEQUENCE [LARGE SCALE GENOMIC DNA]</scope>
    <source>
        <strain>91001 / Biovar Mediaevalis</strain>
    </source>
</reference>
<protein>
    <recommendedName>
        <fullName evidence="3">Small ribosomal subunit protein bS21</fullName>
    </recommendedName>
    <alternativeName>
        <fullName>30S ribosomal protein S21</fullName>
    </alternativeName>
</protein>
<sequence>MPVIKVRENEPFDVALRRFKRSCEKAGVLAEVRRREFYEKPTTERKRAKASAVKRHAKKLARENARRTRLY</sequence>
<proteinExistence type="inferred from homology"/>
<keyword id="KW-1185">Reference proteome</keyword>
<keyword id="KW-0687">Ribonucleoprotein</keyword>
<keyword id="KW-0689">Ribosomal protein</keyword>
<name>RS21_YERPE</name>
<comment type="similarity">
    <text evidence="3">Belongs to the bacterial ribosomal protein bS21 family.</text>
</comment>
<organism>
    <name type="scientific">Yersinia pestis</name>
    <dbReference type="NCBI Taxonomy" id="632"/>
    <lineage>
        <taxon>Bacteria</taxon>
        <taxon>Pseudomonadati</taxon>
        <taxon>Pseudomonadota</taxon>
        <taxon>Gammaproteobacteria</taxon>
        <taxon>Enterobacterales</taxon>
        <taxon>Yersiniaceae</taxon>
        <taxon>Yersinia</taxon>
    </lineage>
</organism>
<gene>
    <name type="primary">rpsU</name>
    <name type="ordered locus">YPO0645</name>
    <name type="ordered locus">y3535</name>
    <name type="ordered locus">YP_2960</name>
</gene>